<gene>
    <name evidence="1" type="primary">rpsH</name>
    <name type="ordered locus">RrIowa_1183</name>
</gene>
<keyword id="KW-0687">Ribonucleoprotein</keyword>
<keyword id="KW-0689">Ribosomal protein</keyword>
<keyword id="KW-0694">RNA-binding</keyword>
<keyword id="KW-0699">rRNA-binding</keyword>
<accession>B0BUP6</accession>
<protein>
    <recommendedName>
        <fullName evidence="1">Small ribosomal subunit protein uS8</fullName>
    </recommendedName>
    <alternativeName>
        <fullName evidence="2">30S ribosomal protein S8</fullName>
    </alternativeName>
</protein>
<sequence length="132" mass="14871">MSMTDNVADMLTRIRNAYKSKLINVSFPSSKIKTSILDVLQKEGYIKDYITTQKNNISYTEVALKYSVNGDASICEIHRVSKPGKRVYSAIKDLKGYYNNMGIYILSTPYGVMSDREAHIKNVGGEVICKVF</sequence>
<feature type="chain" id="PRO_1000085937" description="Small ribosomal subunit protein uS8">
    <location>
        <begin position="1"/>
        <end position="132"/>
    </location>
</feature>
<dbReference type="EMBL" id="CP000766">
    <property type="protein sequence ID" value="ABY72956.1"/>
    <property type="molecule type" value="Genomic_DNA"/>
</dbReference>
<dbReference type="RefSeq" id="WP_010977581.1">
    <property type="nucleotide sequence ID" value="NC_010263.3"/>
</dbReference>
<dbReference type="SMR" id="B0BUP6"/>
<dbReference type="GeneID" id="95361472"/>
<dbReference type="KEGG" id="rrj:RrIowa_1183"/>
<dbReference type="eggNOG" id="COG0096">
    <property type="taxonomic scope" value="Bacteria"/>
</dbReference>
<dbReference type="HOGENOM" id="CLU_098428_0_0_5"/>
<dbReference type="Proteomes" id="UP000000796">
    <property type="component" value="Chromosome"/>
</dbReference>
<dbReference type="GO" id="GO:1990904">
    <property type="term" value="C:ribonucleoprotein complex"/>
    <property type="evidence" value="ECO:0007669"/>
    <property type="project" value="UniProtKB-KW"/>
</dbReference>
<dbReference type="GO" id="GO:0005840">
    <property type="term" value="C:ribosome"/>
    <property type="evidence" value="ECO:0007669"/>
    <property type="project" value="UniProtKB-KW"/>
</dbReference>
<dbReference type="GO" id="GO:0019843">
    <property type="term" value="F:rRNA binding"/>
    <property type="evidence" value="ECO:0007669"/>
    <property type="project" value="UniProtKB-UniRule"/>
</dbReference>
<dbReference type="GO" id="GO:0003735">
    <property type="term" value="F:structural constituent of ribosome"/>
    <property type="evidence" value="ECO:0007669"/>
    <property type="project" value="InterPro"/>
</dbReference>
<dbReference type="GO" id="GO:0006412">
    <property type="term" value="P:translation"/>
    <property type="evidence" value="ECO:0007669"/>
    <property type="project" value="UniProtKB-UniRule"/>
</dbReference>
<dbReference type="FunFam" id="3.30.1370.30:FF:000002">
    <property type="entry name" value="30S ribosomal protein S8"/>
    <property type="match status" value="1"/>
</dbReference>
<dbReference type="FunFam" id="3.30.1490.10:FF:000001">
    <property type="entry name" value="30S ribosomal protein S8"/>
    <property type="match status" value="1"/>
</dbReference>
<dbReference type="Gene3D" id="3.30.1370.30">
    <property type="match status" value="1"/>
</dbReference>
<dbReference type="Gene3D" id="3.30.1490.10">
    <property type="match status" value="1"/>
</dbReference>
<dbReference type="HAMAP" id="MF_01302_B">
    <property type="entry name" value="Ribosomal_uS8_B"/>
    <property type="match status" value="1"/>
</dbReference>
<dbReference type="InterPro" id="IPR000630">
    <property type="entry name" value="Ribosomal_uS8"/>
</dbReference>
<dbReference type="InterPro" id="IPR047863">
    <property type="entry name" value="Ribosomal_uS8_CS"/>
</dbReference>
<dbReference type="InterPro" id="IPR035987">
    <property type="entry name" value="Ribosomal_uS8_sf"/>
</dbReference>
<dbReference type="NCBIfam" id="NF001109">
    <property type="entry name" value="PRK00136.1"/>
    <property type="match status" value="1"/>
</dbReference>
<dbReference type="PANTHER" id="PTHR11758">
    <property type="entry name" value="40S RIBOSOMAL PROTEIN S15A"/>
    <property type="match status" value="1"/>
</dbReference>
<dbReference type="Pfam" id="PF00410">
    <property type="entry name" value="Ribosomal_S8"/>
    <property type="match status" value="1"/>
</dbReference>
<dbReference type="SUPFAM" id="SSF56047">
    <property type="entry name" value="Ribosomal protein S8"/>
    <property type="match status" value="1"/>
</dbReference>
<dbReference type="PROSITE" id="PS00053">
    <property type="entry name" value="RIBOSOMAL_S8"/>
    <property type="match status" value="1"/>
</dbReference>
<proteinExistence type="inferred from homology"/>
<evidence type="ECO:0000255" key="1">
    <source>
        <dbReference type="HAMAP-Rule" id="MF_01302"/>
    </source>
</evidence>
<evidence type="ECO:0000305" key="2"/>
<name>RS8_RICRO</name>
<organism>
    <name type="scientific">Rickettsia rickettsii (strain Iowa)</name>
    <dbReference type="NCBI Taxonomy" id="452659"/>
    <lineage>
        <taxon>Bacteria</taxon>
        <taxon>Pseudomonadati</taxon>
        <taxon>Pseudomonadota</taxon>
        <taxon>Alphaproteobacteria</taxon>
        <taxon>Rickettsiales</taxon>
        <taxon>Rickettsiaceae</taxon>
        <taxon>Rickettsieae</taxon>
        <taxon>Rickettsia</taxon>
        <taxon>spotted fever group</taxon>
    </lineage>
</organism>
<reference key="1">
    <citation type="journal article" date="2008" name="Infect. Immun.">
        <title>Genomic comparison of virulent Rickettsia rickettsii Sheila Smith and avirulent Rickettsia rickettsii Iowa.</title>
        <authorList>
            <person name="Ellison D.W."/>
            <person name="Clark T.R."/>
            <person name="Sturdevant D.E."/>
            <person name="Virtaneva K."/>
            <person name="Porcella S.F."/>
            <person name="Hackstadt T."/>
        </authorList>
    </citation>
    <scope>NUCLEOTIDE SEQUENCE [LARGE SCALE GENOMIC DNA]</scope>
    <source>
        <strain>Iowa</strain>
    </source>
</reference>
<comment type="function">
    <text evidence="1">One of the primary rRNA binding proteins, it binds directly to 16S rRNA central domain where it helps coordinate assembly of the platform of the 30S subunit.</text>
</comment>
<comment type="subunit">
    <text evidence="1">Part of the 30S ribosomal subunit. Contacts proteins S5 and S12.</text>
</comment>
<comment type="similarity">
    <text evidence="1">Belongs to the universal ribosomal protein uS8 family.</text>
</comment>